<organism>
    <name type="scientific">Salmonella arizonae (strain ATCC BAA-731 / CDC346-86 / RSK2980)</name>
    <dbReference type="NCBI Taxonomy" id="41514"/>
    <lineage>
        <taxon>Bacteria</taxon>
        <taxon>Pseudomonadati</taxon>
        <taxon>Pseudomonadota</taxon>
        <taxon>Gammaproteobacteria</taxon>
        <taxon>Enterobacterales</taxon>
        <taxon>Enterobacteriaceae</taxon>
        <taxon>Salmonella</taxon>
    </lineage>
</organism>
<comment type="function">
    <text evidence="1">Succinyl-CoA synthetase functions in the citric acid cycle (TCA), coupling the hydrolysis of succinyl-CoA to the synthesis of either ATP or GTP and thus represents the only step of substrate-level phosphorylation in the TCA. The beta subunit provides nucleotide specificity of the enzyme and binds the substrate succinate, while the binding sites for coenzyme A and phosphate are found in the alpha subunit.</text>
</comment>
<comment type="catalytic activity">
    <reaction evidence="1">
        <text>succinate + ATP + CoA = succinyl-CoA + ADP + phosphate</text>
        <dbReference type="Rhea" id="RHEA:17661"/>
        <dbReference type="ChEBI" id="CHEBI:30031"/>
        <dbReference type="ChEBI" id="CHEBI:30616"/>
        <dbReference type="ChEBI" id="CHEBI:43474"/>
        <dbReference type="ChEBI" id="CHEBI:57287"/>
        <dbReference type="ChEBI" id="CHEBI:57292"/>
        <dbReference type="ChEBI" id="CHEBI:456216"/>
        <dbReference type="EC" id="6.2.1.5"/>
    </reaction>
    <physiologicalReaction direction="right-to-left" evidence="1">
        <dbReference type="Rhea" id="RHEA:17663"/>
    </physiologicalReaction>
</comment>
<comment type="catalytic activity">
    <reaction evidence="1">
        <text>GTP + succinate + CoA = succinyl-CoA + GDP + phosphate</text>
        <dbReference type="Rhea" id="RHEA:22120"/>
        <dbReference type="ChEBI" id="CHEBI:30031"/>
        <dbReference type="ChEBI" id="CHEBI:37565"/>
        <dbReference type="ChEBI" id="CHEBI:43474"/>
        <dbReference type="ChEBI" id="CHEBI:57287"/>
        <dbReference type="ChEBI" id="CHEBI:57292"/>
        <dbReference type="ChEBI" id="CHEBI:58189"/>
    </reaction>
    <physiologicalReaction direction="right-to-left" evidence="1">
        <dbReference type="Rhea" id="RHEA:22122"/>
    </physiologicalReaction>
</comment>
<comment type="cofactor">
    <cofactor evidence="1">
        <name>Mg(2+)</name>
        <dbReference type="ChEBI" id="CHEBI:18420"/>
    </cofactor>
    <text evidence="1">Binds 1 Mg(2+) ion per subunit.</text>
</comment>
<comment type="pathway">
    <text evidence="1">Carbohydrate metabolism; tricarboxylic acid cycle; succinate from succinyl-CoA (ligase route): step 1/1.</text>
</comment>
<comment type="subunit">
    <text evidence="1">Heterotetramer of two alpha and two beta subunits.</text>
</comment>
<comment type="similarity">
    <text evidence="1">Belongs to the succinate/malate CoA ligase beta subunit family.</text>
</comment>
<accession>A9MJL9</accession>
<name>SUCC_SALAR</name>
<dbReference type="EC" id="6.2.1.5" evidence="1"/>
<dbReference type="EMBL" id="CP000880">
    <property type="protein sequence ID" value="ABX22082.1"/>
    <property type="molecule type" value="Genomic_DNA"/>
</dbReference>
<dbReference type="SMR" id="A9MJL9"/>
<dbReference type="STRING" id="41514.SARI_02210"/>
<dbReference type="KEGG" id="ses:SARI_02210"/>
<dbReference type="HOGENOM" id="CLU_037430_4_0_6"/>
<dbReference type="UniPathway" id="UPA00223">
    <property type="reaction ID" value="UER00999"/>
</dbReference>
<dbReference type="Proteomes" id="UP000002084">
    <property type="component" value="Chromosome"/>
</dbReference>
<dbReference type="GO" id="GO:0005829">
    <property type="term" value="C:cytosol"/>
    <property type="evidence" value="ECO:0007669"/>
    <property type="project" value="TreeGrafter"/>
</dbReference>
<dbReference type="GO" id="GO:0042709">
    <property type="term" value="C:succinate-CoA ligase complex"/>
    <property type="evidence" value="ECO:0007669"/>
    <property type="project" value="TreeGrafter"/>
</dbReference>
<dbReference type="GO" id="GO:0005524">
    <property type="term" value="F:ATP binding"/>
    <property type="evidence" value="ECO:0007669"/>
    <property type="project" value="UniProtKB-UniRule"/>
</dbReference>
<dbReference type="GO" id="GO:0000287">
    <property type="term" value="F:magnesium ion binding"/>
    <property type="evidence" value="ECO:0007669"/>
    <property type="project" value="UniProtKB-UniRule"/>
</dbReference>
<dbReference type="GO" id="GO:0004775">
    <property type="term" value="F:succinate-CoA ligase (ADP-forming) activity"/>
    <property type="evidence" value="ECO:0007669"/>
    <property type="project" value="UniProtKB-UniRule"/>
</dbReference>
<dbReference type="GO" id="GO:0004776">
    <property type="term" value="F:succinate-CoA ligase (GDP-forming) activity"/>
    <property type="evidence" value="ECO:0007669"/>
    <property type="project" value="RHEA"/>
</dbReference>
<dbReference type="GO" id="GO:0006104">
    <property type="term" value="P:succinyl-CoA metabolic process"/>
    <property type="evidence" value="ECO:0007669"/>
    <property type="project" value="TreeGrafter"/>
</dbReference>
<dbReference type="GO" id="GO:0006099">
    <property type="term" value="P:tricarboxylic acid cycle"/>
    <property type="evidence" value="ECO:0007669"/>
    <property type="project" value="UniProtKB-UniRule"/>
</dbReference>
<dbReference type="FunFam" id="3.30.1490.20:FF:000002">
    <property type="entry name" value="Succinate--CoA ligase [ADP-forming] subunit beta"/>
    <property type="match status" value="1"/>
</dbReference>
<dbReference type="FunFam" id="3.30.470.20:FF:000002">
    <property type="entry name" value="Succinate--CoA ligase [ADP-forming] subunit beta"/>
    <property type="match status" value="1"/>
</dbReference>
<dbReference type="FunFam" id="3.40.50.261:FF:000001">
    <property type="entry name" value="Succinate--CoA ligase [ADP-forming] subunit beta"/>
    <property type="match status" value="1"/>
</dbReference>
<dbReference type="Gene3D" id="3.30.1490.20">
    <property type="entry name" value="ATP-grasp fold, A domain"/>
    <property type="match status" value="1"/>
</dbReference>
<dbReference type="Gene3D" id="3.30.470.20">
    <property type="entry name" value="ATP-grasp fold, B domain"/>
    <property type="match status" value="1"/>
</dbReference>
<dbReference type="Gene3D" id="3.40.50.261">
    <property type="entry name" value="Succinyl-CoA synthetase domains"/>
    <property type="match status" value="1"/>
</dbReference>
<dbReference type="HAMAP" id="MF_00558">
    <property type="entry name" value="Succ_CoA_beta"/>
    <property type="match status" value="1"/>
</dbReference>
<dbReference type="InterPro" id="IPR011761">
    <property type="entry name" value="ATP-grasp"/>
</dbReference>
<dbReference type="InterPro" id="IPR013650">
    <property type="entry name" value="ATP-grasp_succ-CoA_synth-type"/>
</dbReference>
<dbReference type="InterPro" id="IPR013815">
    <property type="entry name" value="ATP_grasp_subdomain_1"/>
</dbReference>
<dbReference type="InterPro" id="IPR017866">
    <property type="entry name" value="Succ-CoA_synthase_bsu_CS"/>
</dbReference>
<dbReference type="InterPro" id="IPR005811">
    <property type="entry name" value="SUCC_ACL_C"/>
</dbReference>
<dbReference type="InterPro" id="IPR005809">
    <property type="entry name" value="Succ_CoA_ligase-like_bsu"/>
</dbReference>
<dbReference type="InterPro" id="IPR016102">
    <property type="entry name" value="Succinyl-CoA_synth-like"/>
</dbReference>
<dbReference type="NCBIfam" id="NF001913">
    <property type="entry name" value="PRK00696.1"/>
    <property type="match status" value="1"/>
</dbReference>
<dbReference type="NCBIfam" id="TIGR01016">
    <property type="entry name" value="sucCoAbeta"/>
    <property type="match status" value="1"/>
</dbReference>
<dbReference type="PANTHER" id="PTHR11815:SF10">
    <property type="entry name" value="SUCCINATE--COA LIGASE [GDP-FORMING] SUBUNIT BETA, MITOCHONDRIAL"/>
    <property type="match status" value="1"/>
</dbReference>
<dbReference type="PANTHER" id="PTHR11815">
    <property type="entry name" value="SUCCINYL-COA SYNTHETASE BETA CHAIN"/>
    <property type="match status" value="1"/>
</dbReference>
<dbReference type="Pfam" id="PF08442">
    <property type="entry name" value="ATP-grasp_2"/>
    <property type="match status" value="1"/>
</dbReference>
<dbReference type="Pfam" id="PF00549">
    <property type="entry name" value="Ligase_CoA"/>
    <property type="match status" value="1"/>
</dbReference>
<dbReference type="PIRSF" id="PIRSF001554">
    <property type="entry name" value="SucCS_beta"/>
    <property type="match status" value="1"/>
</dbReference>
<dbReference type="SUPFAM" id="SSF56059">
    <property type="entry name" value="Glutathione synthetase ATP-binding domain-like"/>
    <property type="match status" value="1"/>
</dbReference>
<dbReference type="SUPFAM" id="SSF52210">
    <property type="entry name" value="Succinyl-CoA synthetase domains"/>
    <property type="match status" value="1"/>
</dbReference>
<dbReference type="PROSITE" id="PS50975">
    <property type="entry name" value="ATP_GRASP"/>
    <property type="match status" value="1"/>
</dbReference>
<dbReference type="PROSITE" id="PS01217">
    <property type="entry name" value="SUCCINYL_COA_LIG_3"/>
    <property type="match status" value="1"/>
</dbReference>
<sequence>MNLHEYQAKQLFARYGLPAPVGYACTTPREAEEAASKIGAGPWVVKCQVHAGGRGKAGGVKVVNSKEDIRAFAENWLGKRLVTYQTDANGQPVNQILVEAATDIGKELYLGAVVDRSSRRVVFMASTEGGVEIEKVAEETPHLIHKVALDPLTGPMPYQGRELAFKLGLEGKLVQQFTKIFMGLATIFLERDLALIEINPLVITKQGDLICLDGKLGADGNALFRQPDLREMRDQSQEDPREAQAAQWELNYVALDGNIGCMVNGAGLAMGTMDIVKLHGGEPANFLDVGGGATKERVTEAFKIILSDDNVKAVLVNIFGGIVRCDLIADGIIGAVEEVGVNVPVVVRLEGNNAELGAKKLADSGLNIIAAKSLTDAAQQVVAAVEGK</sequence>
<evidence type="ECO:0000255" key="1">
    <source>
        <dbReference type="HAMAP-Rule" id="MF_00558"/>
    </source>
</evidence>
<proteinExistence type="inferred from homology"/>
<feature type="chain" id="PRO_1000082212" description="Succinate--CoA ligase [ADP-forming] subunit beta">
    <location>
        <begin position="1"/>
        <end position="388"/>
    </location>
</feature>
<feature type="domain" description="ATP-grasp" evidence="1">
    <location>
        <begin position="9"/>
        <end position="244"/>
    </location>
</feature>
<feature type="binding site" evidence="1">
    <location>
        <position position="46"/>
    </location>
    <ligand>
        <name>ATP</name>
        <dbReference type="ChEBI" id="CHEBI:30616"/>
    </ligand>
</feature>
<feature type="binding site" evidence="1">
    <location>
        <begin position="53"/>
        <end position="55"/>
    </location>
    <ligand>
        <name>ATP</name>
        <dbReference type="ChEBI" id="CHEBI:30616"/>
    </ligand>
</feature>
<feature type="binding site" evidence="1">
    <location>
        <position position="99"/>
    </location>
    <ligand>
        <name>ATP</name>
        <dbReference type="ChEBI" id="CHEBI:30616"/>
    </ligand>
</feature>
<feature type="binding site" evidence="1">
    <location>
        <position position="102"/>
    </location>
    <ligand>
        <name>ATP</name>
        <dbReference type="ChEBI" id="CHEBI:30616"/>
    </ligand>
</feature>
<feature type="binding site" evidence="1">
    <location>
        <position position="107"/>
    </location>
    <ligand>
        <name>ATP</name>
        <dbReference type="ChEBI" id="CHEBI:30616"/>
    </ligand>
</feature>
<feature type="binding site" evidence="1">
    <location>
        <position position="199"/>
    </location>
    <ligand>
        <name>Mg(2+)</name>
        <dbReference type="ChEBI" id="CHEBI:18420"/>
    </ligand>
</feature>
<feature type="binding site" evidence="1">
    <location>
        <position position="213"/>
    </location>
    <ligand>
        <name>Mg(2+)</name>
        <dbReference type="ChEBI" id="CHEBI:18420"/>
    </ligand>
</feature>
<feature type="binding site" evidence="1">
    <location>
        <position position="264"/>
    </location>
    <ligand>
        <name>substrate</name>
        <note>ligand shared with subunit alpha</note>
    </ligand>
</feature>
<feature type="binding site" evidence="1">
    <location>
        <begin position="321"/>
        <end position="323"/>
    </location>
    <ligand>
        <name>substrate</name>
        <note>ligand shared with subunit alpha</note>
    </ligand>
</feature>
<gene>
    <name evidence="1" type="primary">sucC</name>
    <name type="ordered locus">SARI_02210</name>
</gene>
<reference key="1">
    <citation type="submission" date="2007-11" db="EMBL/GenBank/DDBJ databases">
        <authorList>
            <consortium name="The Salmonella enterica serovar Arizonae Genome Sequencing Project"/>
            <person name="McClelland M."/>
            <person name="Sanderson E.K."/>
            <person name="Porwollik S."/>
            <person name="Spieth J."/>
            <person name="Clifton W.S."/>
            <person name="Fulton R."/>
            <person name="Chunyan W."/>
            <person name="Wollam A."/>
            <person name="Shah N."/>
            <person name="Pepin K."/>
            <person name="Bhonagiri V."/>
            <person name="Nash W."/>
            <person name="Johnson M."/>
            <person name="Thiruvilangam P."/>
            <person name="Wilson R."/>
        </authorList>
    </citation>
    <scope>NUCLEOTIDE SEQUENCE [LARGE SCALE GENOMIC DNA]</scope>
    <source>
        <strain>ATCC BAA-731 / CDC346-86 / RSK2980</strain>
    </source>
</reference>
<protein>
    <recommendedName>
        <fullName evidence="1">Succinate--CoA ligase [ADP-forming] subunit beta</fullName>
        <ecNumber evidence="1">6.2.1.5</ecNumber>
    </recommendedName>
    <alternativeName>
        <fullName evidence="1">Succinyl-CoA synthetase subunit beta</fullName>
        <shortName evidence="1">SCS-beta</shortName>
    </alternativeName>
</protein>
<keyword id="KW-0067">ATP-binding</keyword>
<keyword id="KW-0436">Ligase</keyword>
<keyword id="KW-0460">Magnesium</keyword>
<keyword id="KW-0479">Metal-binding</keyword>
<keyword id="KW-0547">Nucleotide-binding</keyword>
<keyword id="KW-1185">Reference proteome</keyword>
<keyword id="KW-0816">Tricarboxylic acid cycle</keyword>